<keyword id="KW-0119">Carbohydrate metabolism</keyword>
<keyword id="KW-0963">Cytoplasm</keyword>
<keyword id="KW-0413">Isomerase</keyword>
<keyword id="KW-0479">Metal-binding</keyword>
<keyword id="KW-0862">Zinc</keyword>
<reference key="1">
    <citation type="journal article" date="2008" name="Genomics">
        <title>Characterization of ST-4821 complex, a unique Neisseria meningitidis clone.</title>
        <authorList>
            <person name="Peng J."/>
            <person name="Yang L."/>
            <person name="Yang F."/>
            <person name="Yang J."/>
            <person name="Yan Y."/>
            <person name="Nie H."/>
            <person name="Zhang X."/>
            <person name="Xiong Z."/>
            <person name="Jiang Y."/>
            <person name="Cheng F."/>
            <person name="Xu X."/>
            <person name="Chen S."/>
            <person name="Sun L."/>
            <person name="Li W."/>
            <person name="Shen Y."/>
            <person name="Shao Z."/>
            <person name="Liang X."/>
            <person name="Xu J."/>
            <person name="Jin Q."/>
        </authorList>
    </citation>
    <scope>NUCLEOTIDE SEQUENCE [LARGE SCALE GENOMIC DNA]</scope>
    <source>
        <strain>053442</strain>
    </source>
</reference>
<accession>A9M479</accession>
<feature type="chain" id="PRO_1000075099" description="Phosphoheptose isomerase">
    <location>
        <begin position="1"/>
        <end position="197"/>
    </location>
</feature>
<feature type="domain" description="SIS" evidence="1">
    <location>
        <begin position="37"/>
        <end position="197"/>
    </location>
</feature>
<feature type="binding site" evidence="1">
    <location>
        <begin position="52"/>
        <end position="54"/>
    </location>
    <ligand>
        <name>substrate</name>
    </ligand>
</feature>
<feature type="binding site" evidence="1">
    <location>
        <position position="61"/>
    </location>
    <ligand>
        <name>Zn(2+)</name>
        <dbReference type="ChEBI" id="CHEBI:29105"/>
    </ligand>
</feature>
<feature type="binding site" evidence="1">
    <location>
        <position position="65"/>
    </location>
    <ligand>
        <name>substrate</name>
    </ligand>
</feature>
<feature type="binding site" evidence="1">
    <location>
        <position position="65"/>
    </location>
    <ligand>
        <name>Zn(2+)</name>
        <dbReference type="ChEBI" id="CHEBI:29105"/>
    </ligand>
</feature>
<feature type="binding site" evidence="1">
    <location>
        <begin position="94"/>
        <end position="95"/>
    </location>
    <ligand>
        <name>substrate</name>
    </ligand>
</feature>
<feature type="binding site" evidence="1">
    <location>
        <begin position="120"/>
        <end position="122"/>
    </location>
    <ligand>
        <name>substrate</name>
    </ligand>
</feature>
<feature type="binding site" evidence="1">
    <location>
        <position position="125"/>
    </location>
    <ligand>
        <name>substrate</name>
    </ligand>
</feature>
<feature type="binding site" evidence="1">
    <location>
        <position position="175"/>
    </location>
    <ligand>
        <name>substrate</name>
    </ligand>
</feature>
<feature type="binding site" evidence="1">
    <location>
        <position position="175"/>
    </location>
    <ligand>
        <name>Zn(2+)</name>
        <dbReference type="ChEBI" id="CHEBI:29105"/>
    </ligand>
</feature>
<feature type="binding site" evidence="1">
    <location>
        <position position="183"/>
    </location>
    <ligand>
        <name>Zn(2+)</name>
        <dbReference type="ChEBI" id="CHEBI:29105"/>
    </ligand>
</feature>
<gene>
    <name evidence="1" type="primary">gmhA</name>
    <name type="ordered locus">NMCC_2055</name>
</gene>
<proteinExistence type="inferred from homology"/>
<protein>
    <recommendedName>
        <fullName evidence="1">Phosphoheptose isomerase</fullName>
        <ecNumber evidence="1">5.3.1.28</ecNumber>
    </recommendedName>
    <alternativeName>
        <fullName evidence="1">Sedoheptulose 7-phosphate isomerase</fullName>
    </alternativeName>
</protein>
<comment type="function">
    <text evidence="1">Catalyzes the isomerization of sedoheptulose 7-phosphate in D-glycero-D-manno-heptose 7-phosphate.</text>
</comment>
<comment type="catalytic activity">
    <reaction evidence="1">
        <text>2 D-sedoheptulose 7-phosphate = D-glycero-alpha-D-manno-heptose 7-phosphate + D-glycero-beta-D-manno-heptose 7-phosphate</text>
        <dbReference type="Rhea" id="RHEA:27489"/>
        <dbReference type="ChEBI" id="CHEBI:57483"/>
        <dbReference type="ChEBI" id="CHEBI:60203"/>
        <dbReference type="ChEBI" id="CHEBI:60204"/>
        <dbReference type="EC" id="5.3.1.28"/>
    </reaction>
</comment>
<comment type="cofactor">
    <cofactor evidence="1">
        <name>Zn(2+)</name>
        <dbReference type="ChEBI" id="CHEBI:29105"/>
    </cofactor>
    <text evidence="1">Binds 1 zinc ion per subunit.</text>
</comment>
<comment type="pathway">
    <text evidence="1">Carbohydrate biosynthesis; D-glycero-D-manno-heptose 7-phosphate biosynthesis; D-glycero-alpha-D-manno-heptose 7-phosphate and D-glycero-beta-D-manno-heptose 7-phosphate from sedoheptulose 7-phosphate: step 1/1.</text>
</comment>
<comment type="subunit">
    <text evidence="1">Homotetramer.</text>
</comment>
<comment type="subcellular location">
    <subcellularLocation>
        <location evidence="1">Cytoplasm</location>
    </subcellularLocation>
</comment>
<comment type="miscellaneous">
    <text evidence="1">The reaction produces a racemic mixture of D-glycero-alpha-D-manno-heptose 7-phosphate and D-glycero-beta-D-manno-heptose 7-phosphate.</text>
</comment>
<comment type="similarity">
    <text evidence="1">Belongs to the SIS family. GmhA subfamily.</text>
</comment>
<name>GMHA_NEIM0</name>
<dbReference type="EC" id="5.3.1.28" evidence="1"/>
<dbReference type="EMBL" id="CP000381">
    <property type="protein sequence ID" value="ABX74173.1"/>
    <property type="molecule type" value="Genomic_DNA"/>
</dbReference>
<dbReference type="RefSeq" id="WP_002251662.1">
    <property type="nucleotide sequence ID" value="NC_010120.1"/>
</dbReference>
<dbReference type="SMR" id="A9M479"/>
<dbReference type="KEGG" id="nmn:NMCC_2055"/>
<dbReference type="HOGENOM" id="CLU_080999_4_0_4"/>
<dbReference type="UniPathway" id="UPA00041">
    <property type="reaction ID" value="UER00436"/>
</dbReference>
<dbReference type="Proteomes" id="UP000001177">
    <property type="component" value="Chromosome"/>
</dbReference>
<dbReference type="GO" id="GO:0005737">
    <property type="term" value="C:cytoplasm"/>
    <property type="evidence" value="ECO:0007669"/>
    <property type="project" value="UniProtKB-SubCell"/>
</dbReference>
<dbReference type="GO" id="GO:0097367">
    <property type="term" value="F:carbohydrate derivative binding"/>
    <property type="evidence" value="ECO:0007669"/>
    <property type="project" value="InterPro"/>
</dbReference>
<dbReference type="GO" id="GO:0008968">
    <property type="term" value="F:D-sedoheptulose 7-phosphate isomerase activity"/>
    <property type="evidence" value="ECO:0007669"/>
    <property type="project" value="UniProtKB-UniRule"/>
</dbReference>
<dbReference type="GO" id="GO:0008270">
    <property type="term" value="F:zinc ion binding"/>
    <property type="evidence" value="ECO:0007669"/>
    <property type="project" value="UniProtKB-UniRule"/>
</dbReference>
<dbReference type="GO" id="GO:0005975">
    <property type="term" value="P:carbohydrate metabolic process"/>
    <property type="evidence" value="ECO:0007669"/>
    <property type="project" value="UniProtKB-UniRule"/>
</dbReference>
<dbReference type="GO" id="GO:2001061">
    <property type="term" value="P:D-glycero-D-manno-heptose 7-phosphate biosynthetic process"/>
    <property type="evidence" value="ECO:0007669"/>
    <property type="project" value="UniProtKB-UniPathway"/>
</dbReference>
<dbReference type="CDD" id="cd05006">
    <property type="entry name" value="SIS_GmhA"/>
    <property type="match status" value="1"/>
</dbReference>
<dbReference type="Gene3D" id="3.40.50.10490">
    <property type="entry name" value="Glucose-6-phosphate isomerase like protein, domain 1"/>
    <property type="match status" value="1"/>
</dbReference>
<dbReference type="HAMAP" id="MF_00067">
    <property type="entry name" value="GmhA"/>
    <property type="match status" value="1"/>
</dbReference>
<dbReference type="InterPro" id="IPR035461">
    <property type="entry name" value="GmhA/DiaA"/>
</dbReference>
<dbReference type="InterPro" id="IPR004515">
    <property type="entry name" value="Phosphoheptose_Isoase"/>
</dbReference>
<dbReference type="InterPro" id="IPR001347">
    <property type="entry name" value="SIS_dom"/>
</dbReference>
<dbReference type="InterPro" id="IPR046348">
    <property type="entry name" value="SIS_dom_sf"/>
</dbReference>
<dbReference type="InterPro" id="IPR050099">
    <property type="entry name" value="SIS_GmhA/DiaA_subfam"/>
</dbReference>
<dbReference type="NCBIfam" id="TIGR00441">
    <property type="entry name" value="gmhA"/>
    <property type="match status" value="1"/>
</dbReference>
<dbReference type="NCBIfam" id="NF010546">
    <property type="entry name" value="PRK13936.1"/>
    <property type="match status" value="1"/>
</dbReference>
<dbReference type="PANTHER" id="PTHR30390:SF6">
    <property type="entry name" value="DNAA INITIATOR-ASSOCIATING PROTEIN DIAA"/>
    <property type="match status" value="1"/>
</dbReference>
<dbReference type="PANTHER" id="PTHR30390">
    <property type="entry name" value="SEDOHEPTULOSE 7-PHOSPHATE ISOMERASE / DNAA INITIATOR-ASSOCIATING FACTOR FOR REPLICATION INITIATION"/>
    <property type="match status" value="1"/>
</dbReference>
<dbReference type="Pfam" id="PF13580">
    <property type="entry name" value="SIS_2"/>
    <property type="match status" value="1"/>
</dbReference>
<dbReference type="SUPFAM" id="SSF53697">
    <property type="entry name" value="SIS domain"/>
    <property type="match status" value="1"/>
</dbReference>
<dbReference type="PROSITE" id="PS51464">
    <property type="entry name" value="SIS"/>
    <property type="match status" value="1"/>
</dbReference>
<sequence length="197" mass="21104">MTTLQERVAAHFAESIRAKQEAEKVLVEPTVQAAELMLQCLMNDGKILACGNGGSAADAQHFAAEMTGRFEKERMELAAVALTTDTSALTAIGNDYGFNHVFSKQVRALGRAGDVLVGISTSGNSANVIEAVKAAHERDMHVIALTGRDGGKIAAMLKDTDVLLNVPYPRTARIQENHILLIHAMCDCIDSVLLEGM</sequence>
<organism>
    <name type="scientific">Neisseria meningitidis serogroup C (strain 053442)</name>
    <dbReference type="NCBI Taxonomy" id="374833"/>
    <lineage>
        <taxon>Bacteria</taxon>
        <taxon>Pseudomonadati</taxon>
        <taxon>Pseudomonadota</taxon>
        <taxon>Betaproteobacteria</taxon>
        <taxon>Neisseriales</taxon>
        <taxon>Neisseriaceae</taxon>
        <taxon>Neisseria</taxon>
    </lineage>
</organism>
<evidence type="ECO:0000255" key="1">
    <source>
        <dbReference type="HAMAP-Rule" id="MF_00067"/>
    </source>
</evidence>